<accession>A8FLH9</accession>
<reference key="1">
    <citation type="journal article" date="2007" name="J. Bacteriol.">
        <title>The complete genome sequence of Campylobacter jejuni strain 81116 (NCTC11828).</title>
        <authorList>
            <person name="Pearson B.M."/>
            <person name="Gaskin D.J.H."/>
            <person name="Segers R.P.A.M."/>
            <person name="Wells J.M."/>
            <person name="Nuijten P.J.M."/>
            <person name="van Vliet A.H.M."/>
        </authorList>
    </citation>
    <scope>NUCLEOTIDE SEQUENCE [LARGE SCALE GENOMIC DNA]</scope>
    <source>
        <strain>81116 / NCTC 11828</strain>
    </source>
</reference>
<keyword id="KW-0067">ATP-binding</keyword>
<keyword id="KW-0418">Kinase</keyword>
<keyword id="KW-0545">Nucleotide biosynthesis</keyword>
<keyword id="KW-0547">Nucleotide-binding</keyword>
<keyword id="KW-0808">Transferase</keyword>
<protein>
    <recommendedName>
        <fullName evidence="1">Thymidylate kinase</fullName>
        <ecNumber evidence="1">2.7.4.9</ecNumber>
    </recommendedName>
    <alternativeName>
        <fullName evidence="1">dTMP kinase</fullName>
    </alternativeName>
</protein>
<evidence type="ECO:0000255" key="1">
    <source>
        <dbReference type="HAMAP-Rule" id="MF_00165"/>
    </source>
</evidence>
<dbReference type="EC" id="2.7.4.9" evidence="1"/>
<dbReference type="EMBL" id="CP000814">
    <property type="protein sequence ID" value="ABV52316.1"/>
    <property type="molecule type" value="Genomic_DNA"/>
</dbReference>
<dbReference type="RefSeq" id="WP_002866899.1">
    <property type="nucleotide sequence ID" value="NC_009839.1"/>
</dbReference>
<dbReference type="SMR" id="A8FLH9"/>
<dbReference type="KEGG" id="cju:C8J_0717"/>
<dbReference type="HOGENOM" id="CLU_049131_0_0_7"/>
<dbReference type="GO" id="GO:0005829">
    <property type="term" value="C:cytosol"/>
    <property type="evidence" value="ECO:0007669"/>
    <property type="project" value="TreeGrafter"/>
</dbReference>
<dbReference type="GO" id="GO:0005524">
    <property type="term" value="F:ATP binding"/>
    <property type="evidence" value="ECO:0007669"/>
    <property type="project" value="UniProtKB-UniRule"/>
</dbReference>
<dbReference type="GO" id="GO:0004798">
    <property type="term" value="F:dTMP kinase activity"/>
    <property type="evidence" value="ECO:0007669"/>
    <property type="project" value="UniProtKB-UniRule"/>
</dbReference>
<dbReference type="GO" id="GO:0006233">
    <property type="term" value="P:dTDP biosynthetic process"/>
    <property type="evidence" value="ECO:0007669"/>
    <property type="project" value="InterPro"/>
</dbReference>
<dbReference type="GO" id="GO:0006235">
    <property type="term" value="P:dTTP biosynthetic process"/>
    <property type="evidence" value="ECO:0007669"/>
    <property type="project" value="UniProtKB-UniRule"/>
</dbReference>
<dbReference type="GO" id="GO:0006227">
    <property type="term" value="P:dUDP biosynthetic process"/>
    <property type="evidence" value="ECO:0007669"/>
    <property type="project" value="TreeGrafter"/>
</dbReference>
<dbReference type="CDD" id="cd01672">
    <property type="entry name" value="TMPK"/>
    <property type="match status" value="1"/>
</dbReference>
<dbReference type="Gene3D" id="3.40.50.300">
    <property type="entry name" value="P-loop containing nucleotide triphosphate hydrolases"/>
    <property type="match status" value="1"/>
</dbReference>
<dbReference type="HAMAP" id="MF_00165">
    <property type="entry name" value="Thymidylate_kinase"/>
    <property type="match status" value="1"/>
</dbReference>
<dbReference type="InterPro" id="IPR027417">
    <property type="entry name" value="P-loop_NTPase"/>
</dbReference>
<dbReference type="InterPro" id="IPR039430">
    <property type="entry name" value="Thymidylate_kin-like_dom"/>
</dbReference>
<dbReference type="InterPro" id="IPR018094">
    <property type="entry name" value="Thymidylate_kinase"/>
</dbReference>
<dbReference type="NCBIfam" id="TIGR00041">
    <property type="entry name" value="DTMP_kinase"/>
    <property type="match status" value="1"/>
</dbReference>
<dbReference type="PANTHER" id="PTHR10344">
    <property type="entry name" value="THYMIDYLATE KINASE"/>
    <property type="match status" value="1"/>
</dbReference>
<dbReference type="PANTHER" id="PTHR10344:SF4">
    <property type="entry name" value="UMP-CMP KINASE 2, MITOCHONDRIAL"/>
    <property type="match status" value="1"/>
</dbReference>
<dbReference type="Pfam" id="PF02223">
    <property type="entry name" value="Thymidylate_kin"/>
    <property type="match status" value="1"/>
</dbReference>
<dbReference type="SUPFAM" id="SSF52540">
    <property type="entry name" value="P-loop containing nucleoside triphosphate hydrolases"/>
    <property type="match status" value="1"/>
</dbReference>
<dbReference type="PROSITE" id="PS01331">
    <property type="entry name" value="THYMIDYLATE_KINASE"/>
    <property type="match status" value="1"/>
</dbReference>
<comment type="function">
    <text evidence="1">Phosphorylation of dTMP to form dTDP in both de novo and salvage pathways of dTTP synthesis.</text>
</comment>
<comment type="catalytic activity">
    <reaction evidence="1">
        <text>dTMP + ATP = dTDP + ADP</text>
        <dbReference type="Rhea" id="RHEA:13517"/>
        <dbReference type="ChEBI" id="CHEBI:30616"/>
        <dbReference type="ChEBI" id="CHEBI:58369"/>
        <dbReference type="ChEBI" id="CHEBI:63528"/>
        <dbReference type="ChEBI" id="CHEBI:456216"/>
        <dbReference type="EC" id="2.7.4.9"/>
    </reaction>
</comment>
<comment type="similarity">
    <text evidence="1">Belongs to the thymidylate kinase family.</text>
</comment>
<sequence>MYVVFEGIDCVGKSTQISLLKEIYKDAIFTLEPGGTELGKHLREILLNKTHPISKRAELLLFLADRAQHFEEILKTNQNKLIISDRSFISGMAYAKDFENDLLFALNSFALENFFPQKIIFLKGDANLIQERLSQKELDSIEKRGIEYFLSVQDKLEKVLHFLKEKISIEILTLDAKESKEKLHQQIKEFLQ</sequence>
<proteinExistence type="inferred from homology"/>
<gene>
    <name evidence="1" type="primary">tmk</name>
    <name type="ordered locus">C8J_0717</name>
</gene>
<name>KTHY_CAMJ8</name>
<feature type="chain" id="PRO_1000071553" description="Thymidylate kinase">
    <location>
        <begin position="1"/>
        <end position="192"/>
    </location>
</feature>
<feature type="binding site" evidence="1">
    <location>
        <begin position="7"/>
        <end position="14"/>
    </location>
    <ligand>
        <name>ATP</name>
        <dbReference type="ChEBI" id="CHEBI:30616"/>
    </ligand>
</feature>
<organism>
    <name type="scientific">Campylobacter jejuni subsp. jejuni serotype O:6 (strain 81116 / NCTC 11828)</name>
    <dbReference type="NCBI Taxonomy" id="407148"/>
    <lineage>
        <taxon>Bacteria</taxon>
        <taxon>Pseudomonadati</taxon>
        <taxon>Campylobacterota</taxon>
        <taxon>Epsilonproteobacteria</taxon>
        <taxon>Campylobacterales</taxon>
        <taxon>Campylobacteraceae</taxon>
        <taxon>Campylobacter</taxon>
    </lineage>
</organism>